<evidence type="ECO:0000255" key="1">
    <source>
        <dbReference type="HAMAP-Rule" id="MF_01673"/>
    </source>
</evidence>
<feature type="chain" id="PRO_0000352388" description="5-deoxy-glucuronate isomerase">
    <location>
        <begin position="1"/>
        <end position="274"/>
    </location>
</feature>
<accession>A4IPB4</accession>
<comment type="function">
    <text evidence="1">Involved in the isomerization of 5-deoxy-glucuronate (5DG) to 5-dehydro-2-deoxy-D-gluconate (DKG or 2-deoxy-5-keto-D-gluconate).</text>
</comment>
<comment type="catalytic activity">
    <reaction evidence="1">
        <text>5-deoxy-D-glucuronate = 5-dehydro-2-deoxy-D-gluconate</text>
        <dbReference type="Rhea" id="RHEA:25840"/>
        <dbReference type="ChEBI" id="CHEBI:16669"/>
        <dbReference type="ChEBI" id="CHEBI:58852"/>
        <dbReference type="EC" id="5.3.1.30"/>
    </reaction>
</comment>
<comment type="pathway">
    <text evidence="1">Polyol metabolism; myo-inositol degradation into acetyl-CoA; acetyl-CoA from myo-inositol: step 4/7.</text>
</comment>
<comment type="similarity">
    <text evidence="1">Belongs to the isomerase IolB family.</text>
</comment>
<dbReference type="EC" id="5.3.1.30" evidence="1"/>
<dbReference type="EMBL" id="CP000557">
    <property type="protein sequence ID" value="ABO67168.1"/>
    <property type="molecule type" value="Genomic_DNA"/>
</dbReference>
<dbReference type="RefSeq" id="WP_011887533.1">
    <property type="nucleotide sequence ID" value="NC_009328.1"/>
</dbReference>
<dbReference type="SMR" id="A4IPB4"/>
<dbReference type="GeneID" id="87624030"/>
<dbReference type="KEGG" id="gtn:GTNG_1808"/>
<dbReference type="eggNOG" id="COG3718">
    <property type="taxonomic scope" value="Bacteria"/>
</dbReference>
<dbReference type="HOGENOM" id="CLU_066438_1_0_9"/>
<dbReference type="UniPathway" id="UPA00076">
    <property type="reaction ID" value="UER00920"/>
</dbReference>
<dbReference type="Proteomes" id="UP000001578">
    <property type="component" value="Chromosome"/>
</dbReference>
<dbReference type="GO" id="GO:0102482">
    <property type="term" value="F:5-deoxy-D-glucuronate isomerase activity"/>
    <property type="evidence" value="ECO:0007669"/>
    <property type="project" value="UniProtKB-EC"/>
</dbReference>
<dbReference type="GO" id="GO:0008880">
    <property type="term" value="F:glucuronate isomerase activity"/>
    <property type="evidence" value="ECO:0007669"/>
    <property type="project" value="InterPro"/>
</dbReference>
<dbReference type="GO" id="GO:0019310">
    <property type="term" value="P:inositol catabolic process"/>
    <property type="evidence" value="ECO:0007669"/>
    <property type="project" value="UniProtKB-UniRule"/>
</dbReference>
<dbReference type="Gene3D" id="2.60.120.10">
    <property type="entry name" value="Jelly Rolls"/>
    <property type="match status" value="2"/>
</dbReference>
<dbReference type="HAMAP" id="MF_01673">
    <property type="entry name" value="IolB"/>
    <property type="match status" value="1"/>
</dbReference>
<dbReference type="InterPro" id="IPR024203">
    <property type="entry name" value="Deoxy-glucuronate_isom_IolB"/>
</dbReference>
<dbReference type="InterPro" id="IPR023770">
    <property type="entry name" value="IolB_Bacilli"/>
</dbReference>
<dbReference type="InterPro" id="IPR021120">
    <property type="entry name" value="KduI/IolB_isomerase"/>
</dbReference>
<dbReference type="InterPro" id="IPR014710">
    <property type="entry name" value="RmlC-like_jellyroll"/>
</dbReference>
<dbReference type="InterPro" id="IPR011051">
    <property type="entry name" value="RmlC_Cupin_sf"/>
</dbReference>
<dbReference type="NCBIfam" id="TIGR04378">
    <property type="entry name" value="myo_inos_iolB"/>
    <property type="match status" value="1"/>
</dbReference>
<dbReference type="PANTHER" id="PTHR39193">
    <property type="entry name" value="5-DEOXY-GLUCURONATE ISOMERASE"/>
    <property type="match status" value="1"/>
</dbReference>
<dbReference type="PANTHER" id="PTHR39193:SF1">
    <property type="entry name" value="5-DEOXY-GLUCURONATE ISOMERASE"/>
    <property type="match status" value="1"/>
</dbReference>
<dbReference type="Pfam" id="PF04962">
    <property type="entry name" value="KduI"/>
    <property type="match status" value="1"/>
</dbReference>
<dbReference type="PIRSF" id="PIRSF036628">
    <property type="entry name" value="IolB"/>
    <property type="match status" value="1"/>
</dbReference>
<dbReference type="SUPFAM" id="SSF51182">
    <property type="entry name" value="RmlC-like cupins"/>
    <property type="match status" value="1"/>
</dbReference>
<protein>
    <recommendedName>
        <fullName evidence="1">5-deoxy-glucuronate isomerase</fullName>
        <shortName evidence="1">5DG isomerase</shortName>
        <ecNumber evidence="1">5.3.1.30</ecNumber>
    </recommendedName>
</protein>
<sequence length="274" mass="31184">MSRFIISSHSPNEEGNVVRVTPESAGWEYVGFEVYALTKGQTLRKETIDQEACLVLLKGKANIHTRHERWENIGLRMDVFEKIPPYSVYVPSNDVYEVQALTDLELAVCLAPGKGTYPARLIPPSEVGVEMRGAGNIERRIHNILPESKPADSLLVVEVFTPEGNWSSYPPHKHDQHNLPHESYLEETYYHQINPDHGFMVQRVYTDDRSIDETMVVKNGDVVLVPKGYHPVSAPPGYEGYYLNVMAGPVRTWKFRNDPDHEWVMESKLAAKQK</sequence>
<name>IOLB_GEOTN</name>
<reference key="1">
    <citation type="journal article" date="2007" name="Proc. Natl. Acad. Sci. U.S.A.">
        <title>Genome and proteome of long-chain alkane degrading Geobacillus thermodenitrificans NG80-2 isolated from a deep-subsurface oil reservoir.</title>
        <authorList>
            <person name="Feng L."/>
            <person name="Wang W."/>
            <person name="Cheng J."/>
            <person name="Ren Y."/>
            <person name="Zhao G."/>
            <person name="Gao C."/>
            <person name="Tang Y."/>
            <person name="Liu X."/>
            <person name="Han W."/>
            <person name="Peng X."/>
            <person name="Liu R."/>
            <person name="Wang L."/>
        </authorList>
    </citation>
    <scope>NUCLEOTIDE SEQUENCE [LARGE SCALE GENOMIC DNA]</scope>
    <source>
        <strain>NG80-2</strain>
    </source>
</reference>
<keyword id="KW-0413">Isomerase</keyword>
<proteinExistence type="inferred from homology"/>
<organism>
    <name type="scientific">Geobacillus thermodenitrificans (strain NG80-2)</name>
    <dbReference type="NCBI Taxonomy" id="420246"/>
    <lineage>
        <taxon>Bacteria</taxon>
        <taxon>Bacillati</taxon>
        <taxon>Bacillota</taxon>
        <taxon>Bacilli</taxon>
        <taxon>Bacillales</taxon>
        <taxon>Anoxybacillaceae</taxon>
        <taxon>Geobacillus</taxon>
    </lineage>
</organism>
<gene>
    <name evidence="1" type="primary">iolB</name>
    <name type="ordered locus">GTNG_1808</name>
</gene>